<sequence>MSTLRIPIALQQAVMQCLRHYLQLANQHLGTAYPEPKINYHQRGTNAGSAYLQSFEIRLNPVLLLENKQPFIDEVVPHELAHLLVYRQFDRVAPHGKEWRWMMEQVLKVPASRTHQFEVASVRSKTFNYQCKCQQHALTIRRHNKVLRGESEYRCRQCGEKLQFITINPD</sequence>
<protein>
    <recommendedName>
        <fullName evidence="1">Protein SprT</fullName>
    </recommendedName>
</protein>
<accession>B2K0S8</accession>
<gene>
    <name evidence="1" type="primary">sprT</name>
    <name type="ordered locus">YPTS_3336</name>
</gene>
<keyword id="KW-0963">Cytoplasm</keyword>
<keyword id="KW-0479">Metal-binding</keyword>
<keyword id="KW-0862">Zinc</keyword>
<reference key="1">
    <citation type="submission" date="2008-04" db="EMBL/GenBank/DDBJ databases">
        <title>Complete sequence of Yersinia pseudotuberculosis PB1/+.</title>
        <authorList>
            <person name="Copeland A."/>
            <person name="Lucas S."/>
            <person name="Lapidus A."/>
            <person name="Glavina del Rio T."/>
            <person name="Dalin E."/>
            <person name="Tice H."/>
            <person name="Bruce D."/>
            <person name="Goodwin L."/>
            <person name="Pitluck S."/>
            <person name="Munk A.C."/>
            <person name="Brettin T."/>
            <person name="Detter J.C."/>
            <person name="Han C."/>
            <person name="Tapia R."/>
            <person name="Schmutz J."/>
            <person name="Larimer F."/>
            <person name="Land M."/>
            <person name="Hauser L."/>
            <person name="Challacombe J.F."/>
            <person name="Green L."/>
            <person name="Lindler L.E."/>
            <person name="Nikolich M.P."/>
            <person name="Richardson P."/>
        </authorList>
    </citation>
    <scope>NUCLEOTIDE SEQUENCE [LARGE SCALE GENOMIC DNA]</scope>
    <source>
        <strain>PB1/+</strain>
    </source>
</reference>
<proteinExistence type="inferred from homology"/>
<organism>
    <name type="scientific">Yersinia pseudotuberculosis serotype IB (strain PB1/+)</name>
    <dbReference type="NCBI Taxonomy" id="502801"/>
    <lineage>
        <taxon>Bacteria</taxon>
        <taxon>Pseudomonadati</taxon>
        <taxon>Pseudomonadota</taxon>
        <taxon>Gammaproteobacteria</taxon>
        <taxon>Enterobacterales</taxon>
        <taxon>Yersiniaceae</taxon>
        <taxon>Yersinia</taxon>
    </lineage>
</organism>
<name>SPRT_YERPB</name>
<feature type="chain" id="PRO_1000133257" description="Protein SprT">
    <location>
        <begin position="1"/>
        <end position="170"/>
    </location>
</feature>
<feature type="domain" description="SprT-like" evidence="1">
    <location>
        <begin position="22"/>
        <end position="165"/>
    </location>
</feature>
<feature type="active site" evidence="1">
    <location>
        <position position="79"/>
    </location>
</feature>
<feature type="binding site" evidence="1">
    <location>
        <position position="78"/>
    </location>
    <ligand>
        <name>Zn(2+)</name>
        <dbReference type="ChEBI" id="CHEBI:29105"/>
    </ligand>
</feature>
<feature type="binding site" evidence="1">
    <location>
        <position position="82"/>
    </location>
    <ligand>
        <name>Zn(2+)</name>
        <dbReference type="ChEBI" id="CHEBI:29105"/>
    </ligand>
</feature>
<comment type="cofactor">
    <cofactor evidence="1">
        <name>Zn(2+)</name>
        <dbReference type="ChEBI" id="CHEBI:29105"/>
    </cofactor>
    <text evidence="1">Binds 1 zinc ion.</text>
</comment>
<comment type="subcellular location">
    <subcellularLocation>
        <location evidence="1">Cytoplasm</location>
    </subcellularLocation>
</comment>
<comment type="similarity">
    <text evidence="1">Belongs to the SprT family.</text>
</comment>
<evidence type="ECO:0000255" key="1">
    <source>
        <dbReference type="HAMAP-Rule" id="MF_00746"/>
    </source>
</evidence>
<dbReference type="EMBL" id="CP001048">
    <property type="protein sequence ID" value="ACC90291.1"/>
    <property type="molecule type" value="Genomic_DNA"/>
</dbReference>
<dbReference type="RefSeq" id="WP_011192970.1">
    <property type="nucleotide sequence ID" value="NZ_CP009780.1"/>
</dbReference>
<dbReference type="KEGG" id="ypb:YPTS_3336"/>
<dbReference type="PATRIC" id="fig|502801.10.peg.2777"/>
<dbReference type="GO" id="GO:0005737">
    <property type="term" value="C:cytoplasm"/>
    <property type="evidence" value="ECO:0007669"/>
    <property type="project" value="UniProtKB-SubCell"/>
</dbReference>
<dbReference type="GO" id="GO:0008270">
    <property type="term" value="F:zinc ion binding"/>
    <property type="evidence" value="ECO:0007669"/>
    <property type="project" value="UniProtKB-UniRule"/>
</dbReference>
<dbReference type="GO" id="GO:0006950">
    <property type="term" value="P:response to stress"/>
    <property type="evidence" value="ECO:0007669"/>
    <property type="project" value="UniProtKB-ARBA"/>
</dbReference>
<dbReference type="Gene3D" id="3.30.2010.10">
    <property type="entry name" value="Metalloproteases ('zincins'), catalytic domain"/>
    <property type="match status" value="1"/>
</dbReference>
<dbReference type="HAMAP" id="MF_00746">
    <property type="entry name" value="SprT"/>
    <property type="match status" value="1"/>
</dbReference>
<dbReference type="InterPro" id="IPR006640">
    <property type="entry name" value="SprT-like_domain"/>
</dbReference>
<dbReference type="InterPro" id="IPR035240">
    <property type="entry name" value="SprT_Zn_ribbon"/>
</dbReference>
<dbReference type="InterPro" id="IPR023483">
    <property type="entry name" value="Uncharacterised_SprT"/>
</dbReference>
<dbReference type="NCBIfam" id="NF003421">
    <property type="entry name" value="PRK04860.1"/>
    <property type="match status" value="1"/>
</dbReference>
<dbReference type="PANTHER" id="PTHR38773">
    <property type="entry name" value="PROTEIN SPRT"/>
    <property type="match status" value="1"/>
</dbReference>
<dbReference type="PANTHER" id="PTHR38773:SF1">
    <property type="entry name" value="PROTEIN SPRT"/>
    <property type="match status" value="1"/>
</dbReference>
<dbReference type="Pfam" id="PF10263">
    <property type="entry name" value="SprT-like"/>
    <property type="match status" value="1"/>
</dbReference>
<dbReference type="Pfam" id="PF17283">
    <property type="entry name" value="Zn_ribbon_SprT"/>
    <property type="match status" value="1"/>
</dbReference>
<dbReference type="SMART" id="SM00731">
    <property type="entry name" value="SprT"/>
    <property type="match status" value="1"/>
</dbReference>
<dbReference type="PROSITE" id="PS00142">
    <property type="entry name" value="ZINC_PROTEASE"/>
    <property type="match status" value="1"/>
</dbReference>